<reference key="1">
    <citation type="journal article" date="2009" name="BMC Genomics">
        <title>Pseudogene accumulation in the evolutionary histories of Salmonella enterica serovars Paratyphi A and Typhi.</title>
        <authorList>
            <person name="Holt K.E."/>
            <person name="Thomson N.R."/>
            <person name="Wain J."/>
            <person name="Langridge G.C."/>
            <person name="Hasan R."/>
            <person name="Bhutta Z.A."/>
            <person name="Quail M.A."/>
            <person name="Norbertczak H."/>
            <person name="Walker D."/>
            <person name="Simmonds M."/>
            <person name="White B."/>
            <person name="Bason N."/>
            <person name="Mungall K."/>
            <person name="Dougan G."/>
            <person name="Parkhill J."/>
        </authorList>
    </citation>
    <scope>NUCLEOTIDE SEQUENCE [LARGE SCALE GENOMIC DNA]</scope>
    <source>
        <strain>AKU_12601</strain>
    </source>
</reference>
<keyword id="KW-0030">Aminoacyl-tRNA synthetase</keyword>
<keyword id="KW-0067">ATP-binding</keyword>
<keyword id="KW-0963">Cytoplasm</keyword>
<keyword id="KW-0436">Ligase</keyword>
<keyword id="KW-0547">Nucleotide-binding</keyword>
<keyword id="KW-0648">Protein biosynthesis</keyword>
<feature type="chain" id="PRO_1000095590" description="Histidine--tRNA ligase">
    <location>
        <begin position="1"/>
        <end position="424"/>
    </location>
</feature>
<gene>
    <name evidence="1" type="primary">hisS</name>
    <name type="ordered locus">SSPA0325</name>
</gene>
<protein>
    <recommendedName>
        <fullName evidence="1">Histidine--tRNA ligase</fullName>
        <ecNumber evidence="1">6.1.1.21</ecNumber>
    </recommendedName>
    <alternativeName>
        <fullName evidence="1">Histidyl-tRNA synthetase</fullName>
        <shortName evidence="1">HisRS</shortName>
    </alternativeName>
</protein>
<name>SYH_SALPK</name>
<organism>
    <name type="scientific">Salmonella paratyphi A (strain AKU_12601)</name>
    <dbReference type="NCBI Taxonomy" id="554290"/>
    <lineage>
        <taxon>Bacteria</taxon>
        <taxon>Pseudomonadati</taxon>
        <taxon>Pseudomonadota</taxon>
        <taxon>Gammaproteobacteria</taxon>
        <taxon>Enterobacterales</taxon>
        <taxon>Enterobacteriaceae</taxon>
        <taxon>Salmonella</taxon>
    </lineage>
</organism>
<comment type="catalytic activity">
    <reaction evidence="1">
        <text>tRNA(His) + L-histidine + ATP = L-histidyl-tRNA(His) + AMP + diphosphate + H(+)</text>
        <dbReference type="Rhea" id="RHEA:17313"/>
        <dbReference type="Rhea" id="RHEA-COMP:9665"/>
        <dbReference type="Rhea" id="RHEA-COMP:9689"/>
        <dbReference type="ChEBI" id="CHEBI:15378"/>
        <dbReference type="ChEBI" id="CHEBI:30616"/>
        <dbReference type="ChEBI" id="CHEBI:33019"/>
        <dbReference type="ChEBI" id="CHEBI:57595"/>
        <dbReference type="ChEBI" id="CHEBI:78442"/>
        <dbReference type="ChEBI" id="CHEBI:78527"/>
        <dbReference type="ChEBI" id="CHEBI:456215"/>
        <dbReference type="EC" id="6.1.1.21"/>
    </reaction>
</comment>
<comment type="subunit">
    <text evidence="1">Homodimer.</text>
</comment>
<comment type="subcellular location">
    <subcellularLocation>
        <location evidence="1">Cytoplasm</location>
    </subcellularLocation>
</comment>
<comment type="similarity">
    <text evidence="1">Belongs to the class-II aminoacyl-tRNA synthetase family.</text>
</comment>
<dbReference type="EC" id="6.1.1.21" evidence="1"/>
<dbReference type="EMBL" id="FM200053">
    <property type="protein sequence ID" value="CAR58443.1"/>
    <property type="molecule type" value="Genomic_DNA"/>
</dbReference>
<dbReference type="RefSeq" id="WP_001107148.1">
    <property type="nucleotide sequence ID" value="NC_011147.1"/>
</dbReference>
<dbReference type="SMR" id="B5BAY6"/>
<dbReference type="KEGG" id="sek:SSPA0325"/>
<dbReference type="HOGENOM" id="CLU_025113_1_1_6"/>
<dbReference type="Proteomes" id="UP000001869">
    <property type="component" value="Chromosome"/>
</dbReference>
<dbReference type="GO" id="GO:0005737">
    <property type="term" value="C:cytoplasm"/>
    <property type="evidence" value="ECO:0007669"/>
    <property type="project" value="UniProtKB-SubCell"/>
</dbReference>
<dbReference type="GO" id="GO:0005524">
    <property type="term" value="F:ATP binding"/>
    <property type="evidence" value="ECO:0007669"/>
    <property type="project" value="UniProtKB-UniRule"/>
</dbReference>
<dbReference type="GO" id="GO:0004821">
    <property type="term" value="F:histidine-tRNA ligase activity"/>
    <property type="evidence" value="ECO:0007669"/>
    <property type="project" value="UniProtKB-UniRule"/>
</dbReference>
<dbReference type="GO" id="GO:0006427">
    <property type="term" value="P:histidyl-tRNA aminoacylation"/>
    <property type="evidence" value="ECO:0007669"/>
    <property type="project" value="UniProtKB-UniRule"/>
</dbReference>
<dbReference type="CDD" id="cd00773">
    <property type="entry name" value="HisRS-like_core"/>
    <property type="match status" value="1"/>
</dbReference>
<dbReference type="CDD" id="cd00859">
    <property type="entry name" value="HisRS_anticodon"/>
    <property type="match status" value="1"/>
</dbReference>
<dbReference type="FunFam" id="3.30.930.10:FF:000005">
    <property type="entry name" value="Histidine--tRNA ligase"/>
    <property type="match status" value="1"/>
</dbReference>
<dbReference type="FunFam" id="3.40.50.800:FF:000007">
    <property type="entry name" value="Histidine--tRNA ligase"/>
    <property type="match status" value="1"/>
</dbReference>
<dbReference type="Gene3D" id="3.40.50.800">
    <property type="entry name" value="Anticodon-binding domain"/>
    <property type="match status" value="1"/>
</dbReference>
<dbReference type="Gene3D" id="3.30.930.10">
    <property type="entry name" value="Bira Bifunctional Protein, Domain 2"/>
    <property type="match status" value="1"/>
</dbReference>
<dbReference type="HAMAP" id="MF_00127">
    <property type="entry name" value="His_tRNA_synth"/>
    <property type="match status" value="1"/>
</dbReference>
<dbReference type="InterPro" id="IPR006195">
    <property type="entry name" value="aa-tRNA-synth_II"/>
</dbReference>
<dbReference type="InterPro" id="IPR045864">
    <property type="entry name" value="aa-tRNA-synth_II/BPL/LPL"/>
</dbReference>
<dbReference type="InterPro" id="IPR004154">
    <property type="entry name" value="Anticodon-bd"/>
</dbReference>
<dbReference type="InterPro" id="IPR036621">
    <property type="entry name" value="Anticodon-bd_dom_sf"/>
</dbReference>
<dbReference type="InterPro" id="IPR015807">
    <property type="entry name" value="His-tRNA-ligase"/>
</dbReference>
<dbReference type="InterPro" id="IPR041715">
    <property type="entry name" value="HisRS-like_core"/>
</dbReference>
<dbReference type="InterPro" id="IPR004516">
    <property type="entry name" value="HisRS/HisZ"/>
</dbReference>
<dbReference type="InterPro" id="IPR033656">
    <property type="entry name" value="HisRS_anticodon"/>
</dbReference>
<dbReference type="NCBIfam" id="TIGR00442">
    <property type="entry name" value="hisS"/>
    <property type="match status" value="1"/>
</dbReference>
<dbReference type="PANTHER" id="PTHR43707:SF1">
    <property type="entry name" value="HISTIDINE--TRNA LIGASE, MITOCHONDRIAL-RELATED"/>
    <property type="match status" value="1"/>
</dbReference>
<dbReference type="PANTHER" id="PTHR43707">
    <property type="entry name" value="HISTIDYL-TRNA SYNTHETASE"/>
    <property type="match status" value="1"/>
</dbReference>
<dbReference type="Pfam" id="PF03129">
    <property type="entry name" value="HGTP_anticodon"/>
    <property type="match status" value="1"/>
</dbReference>
<dbReference type="Pfam" id="PF13393">
    <property type="entry name" value="tRNA-synt_His"/>
    <property type="match status" value="1"/>
</dbReference>
<dbReference type="PIRSF" id="PIRSF001549">
    <property type="entry name" value="His-tRNA_synth"/>
    <property type="match status" value="1"/>
</dbReference>
<dbReference type="SUPFAM" id="SSF52954">
    <property type="entry name" value="Class II aaRS ABD-related"/>
    <property type="match status" value="1"/>
</dbReference>
<dbReference type="SUPFAM" id="SSF55681">
    <property type="entry name" value="Class II aaRS and biotin synthetases"/>
    <property type="match status" value="1"/>
</dbReference>
<dbReference type="PROSITE" id="PS50862">
    <property type="entry name" value="AA_TRNA_LIGASE_II"/>
    <property type="match status" value="1"/>
</dbReference>
<proteinExistence type="inferred from homology"/>
<sequence length="424" mass="47001">MAKNIQAIRGMNDYLPGETAIWQRIEGTLKNVLGSYGYSEIRLPIVEQTPLFKRAIGEVTDVVEKEMYTFEDRNGDSLTLRPEGTAGCVRAGIEHGLLYNQEQRLWYIGPMFRHERPQKGRYRQFHQLGAEVFGLQGPDIDAELIMLTARWWRALGISEHVSLELNSIGSLEARANYRDALVAFLEQHQETLDEDCKRRMYTNPLRVLDSKNPDVQALLNDAPVLGDYLDDDSREHFTGLCKLLDAAGIAYTVNQRLVRGLDYYNRTVFEWVTNSLGSQGTVCAGGRYDGLVEQLGGRATPAVGFAMGLERLVLLVQAVNPEFIASPVVDIYLVAAGAQTQSAAMTLAERLRDEMPGVKLMTNHGGGNFKKQFARADKWGARIALVLGESEVADGTVVVKDLRSGEQTAVAQDSVAAHLRTLLG</sequence>
<accession>B5BAY6</accession>
<evidence type="ECO:0000255" key="1">
    <source>
        <dbReference type="HAMAP-Rule" id="MF_00127"/>
    </source>
</evidence>